<protein>
    <recommendedName>
        <fullName evidence="1">GMP synthase [glutamine-hydrolyzing] subunit A</fullName>
        <ecNumber evidence="1">6.3.5.2</ecNumber>
    </recommendedName>
    <alternativeName>
        <fullName evidence="1">Glutamine amidotransferase</fullName>
    </alternativeName>
</protein>
<dbReference type="EC" id="6.3.5.2" evidence="1"/>
<dbReference type="EMBL" id="AE000666">
    <property type="protein sequence ID" value="AAB85214.1"/>
    <property type="molecule type" value="Genomic_DNA"/>
</dbReference>
<dbReference type="PIR" id="F69194">
    <property type="entry name" value="F69194"/>
</dbReference>
<dbReference type="SMR" id="O26805"/>
<dbReference type="FunCoup" id="O26805">
    <property type="interactions" value="26"/>
</dbReference>
<dbReference type="STRING" id="187420.MTH_709"/>
<dbReference type="MEROPS" id="C26.A31"/>
<dbReference type="PaxDb" id="187420-MTH_709"/>
<dbReference type="EnsemblBacteria" id="AAB85214">
    <property type="protein sequence ID" value="AAB85214"/>
    <property type="gene ID" value="MTH_709"/>
</dbReference>
<dbReference type="KEGG" id="mth:MTH_709"/>
<dbReference type="PATRIC" id="fig|187420.15.peg.693"/>
<dbReference type="HOGENOM" id="CLU_014340_1_4_2"/>
<dbReference type="InParanoid" id="O26805"/>
<dbReference type="UniPathway" id="UPA00189">
    <property type="reaction ID" value="UER00296"/>
</dbReference>
<dbReference type="Proteomes" id="UP000005223">
    <property type="component" value="Chromosome"/>
</dbReference>
<dbReference type="GO" id="GO:0005829">
    <property type="term" value="C:cytosol"/>
    <property type="evidence" value="ECO:0007669"/>
    <property type="project" value="TreeGrafter"/>
</dbReference>
<dbReference type="GO" id="GO:0005524">
    <property type="term" value="F:ATP binding"/>
    <property type="evidence" value="ECO:0007669"/>
    <property type="project" value="UniProtKB-KW"/>
</dbReference>
<dbReference type="GO" id="GO:0003921">
    <property type="term" value="F:GMP synthase activity"/>
    <property type="evidence" value="ECO:0007669"/>
    <property type="project" value="TreeGrafter"/>
</dbReference>
<dbReference type="CDD" id="cd01742">
    <property type="entry name" value="GATase1_GMP_Synthase"/>
    <property type="match status" value="1"/>
</dbReference>
<dbReference type="FunFam" id="3.40.50.880:FF:000047">
    <property type="entry name" value="GMP synthase [glutamine-hydrolyzing] subunit A"/>
    <property type="match status" value="1"/>
</dbReference>
<dbReference type="Gene3D" id="3.40.50.880">
    <property type="match status" value="1"/>
</dbReference>
<dbReference type="HAMAP" id="MF_01510">
    <property type="entry name" value="GMP_synthase_A"/>
    <property type="match status" value="1"/>
</dbReference>
<dbReference type="InterPro" id="IPR029062">
    <property type="entry name" value="Class_I_gatase-like"/>
</dbReference>
<dbReference type="InterPro" id="IPR017926">
    <property type="entry name" value="GATASE"/>
</dbReference>
<dbReference type="InterPro" id="IPR004739">
    <property type="entry name" value="GMP_synth_GATase"/>
</dbReference>
<dbReference type="InterPro" id="IPR023686">
    <property type="entry name" value="GMP_synthase_A"/>
</dbReference>
<dbReference type="NCBIfam" id="TIGR00888">
    <property type="entry name" value="guaA_Nterm"/>
    <property type="match status" value="1"/>
</dbReference>
<dbReference type="NCBIfam" id="NF001975">
    <property type="entry name" value="PRK00758.1"/>
    <property type="match status" value="1"/>
</dbReference>
<dbReference type="PANTHER" id="PTHR11922:SF2">
    <property type="entry name" value="GMP SYNTHASE [GLUTAMINE-HYDROLYZING]"/>
    <property type="match status" value="1"/>
</dbReference>
<dbReference type="PANTHER" id="PTHR11922">
    <property type="entry name" value="GMP SYNTHASE-RELATED"/>
    <property type="match status" value="1"/>
</dbReference>
<dbReference type="Pfam" id="PF00117">
    <property type="entry name" value="GATase"/>
    <property type="match status" value="1"/>
</dbReference>
<dbReference type="PRINTS" id="PR00097">
    <property type="entry name" value="ANTSNTHASEII"/>
</dbReference>
<dbReference type="PRINTS" id="PR00096">
    <property type="entry name" value="GATASE"/>
</dbReference>
<dbReference type="SUPFAM" id="SSF52317">
    <property type="entry name" value="Class I glutamine amidotransferase-like"/>
    <property type="match status" value="1"/>
</dbReference>
<dbReference type="PROSITE" id="PS51273">
    <property type="entry name" value="GATASE_TYPE_1"/>
    <property type="match status" value="1"/>
</dbReference>
<accession>O26805</accession>
<feature type="chain" id="PRO_0000140225" description="GMP synthase [glutamine-hydrolyzing] subunit A">
    <location>
        <begin position="1"/>
        <end position="186"/>
    </location>
</feature>
<feature type="domain" description="Glutamine amidotransferase type-1" evidence="1">
    <location>
        <begin position="3"/>
        <end position="186"/>
    </location>
</feature>
<feature type="active site" description="Nucleophile" evidence="1">
    <location>
        <position position="77"/>
    </location>
</feature>
<feature type="active site" evidence="1">
    <location>
        <position position="164"/>
    </location>
</feature>
<feature type="active site" evidence="1">
    <location>
        <position position="166"/>
    </location>
</feature>
<sequence length="186" mass="21130">MFMILIINNHGQYNHRIHRTLRYLQIPSELVPNTTPLDEIISRDPEGLILGGGPSLERSGNCVEYIQKLEIPILGICLGHQLIAKAYGGEVATAEAESYAQIELEILDEDDIFRGLGPRMSVWASHKDEVKKLPDEFDVLATSSICEVEAMKHHDKPVYGIQFHPEVHHTREGHRVFENFYDVCRS</sequence>
<comment type="function">
    <text evidence="1">Catalyzes the synthesis of GMP from XMP.</text>
</comment>
<comment type="catalytic activity">
    <reaction evidence="1">
        <text>XMP + L-glutamine + ATP + H2O = GMP + L-glutamate + AMP + diphosphate + 2 H(+)</text>
        <dbReference type="Rhea" id="RHEA:11680"/>
        <dbReference type="ChEBI" id="CHEBI:15377"/>
        <dbReference type="ChEBI" id="CHEBI:15378"/>
        <dbReference type="ChEBI" id="CHEBI:29985"/>
        <dbReference type="ChEBI" id="CHEBI:30616"/>
        <dbReference type="ChEBI" id="CHEBI:33019"/>
        <dbReference type="ChEBI" id="CHEBI:57464"/>
        <dbReference type="ChEBI" id="CHEBI:58115"/>
        <dbReference type="ChEBI" id="CHEBI:58359"/>
        <dbReference type="ChEBI" id="CHEBI:456215"/>
        <dbReference type="EC" id="6.3.5.2"/>
    </reaction>
</comment>
<comment type="pathway">
    <text evidence="1">Purine metabolism; GMP biosynthesis; GMP from XMP (L-Gln route): step 1/1.</text>
</comment>
<comment type="subunit">
    <text evidence="1">Heterodimer composed of a glutamine amidotransferase subunit (A) and a GMP-binding subunit (B).</text>
</comment>
<name>GUAAA_METTH</name>
<evidence type="ECO:0000255" key="1">
    <source>
        <dbReference type="HAMAP-Rule" id="MF_01510"/>
    </source>
</evidence>
<gene>
    <name evidence="1" type="primary">guaAA</name>
    <name type="ordered locus">MTH_709</name>
</gene>
<organism>
    <name type="scientific">Methanothermobacter thermautotrophicus (strain ATCC 29096 / DSM 1053 / JCM 10044 / NBRC 100330 / Delta H)</name>
    <name type="common">Methanobacterium thermoautotrophicum</name>
    <dbReference type="NCBI Taxonomy" id="187420"/>
    <lineage>
        <taxon>Archaea</taxon>
        <taxon>Methanobacteriati</taxon>
        <taxon>Methanobacteriota</taxon>
        <taxon>Methanomada group</taxon>
        <taxon>Methanobacteria</taxon>
        <taxon>Methanobacteriales</taxon>
        <taxon>Methanobacteriaceae</taxon>
        <taxon>Methanothermobacter</taxon>
    </lineage>
</organism>
<reference key="1">
    <citation type="journal article" date="1997" name="J. Bacteriol.">
        <title>Complete genome sequence of Methanobacterium thermoautotrophicum deltaH: functional analysis and comparative genomics.</title>
        <authorList>
            <person name="Smith D.R."/>
            <person name="Doucette-Stamm L.A."/>
            <person name="Deloughery C."/>
            <person name="Lee H.-M."/>
            <person name="Dubois J."/>
            <person name="Aldredge T."/>
            <person name="Bashirzadeh R."/>
            <person name="Blakely D."/>
            <person name="Cook R."/>
            <person name="Gilbert K."/>
            <person name="Harrison D."/>
            <person name="Hoang L."/>
            <person name="Keagle P."/>
            <person name="Lumm W."/>
            <person name="Pothier B."/>
            <person name="Qiu D."/>
            <person name="Spadafora R."/>
            <person name="Vicare R."/>
            <person name="Wang Y."/>
            <person name="Wierzbowski J."/>
            <person name="Gibson R."/>
            <person name="Jiwani N."/>
            <person name="Caruso A."/>
            <person name="Bush D."/>
            <person name="Safer H."/>
            <person name="Patwell D."/>
            <person name="Prabhakar S."/>
            <person name="McDougall S."/>
            <person name="Shimer G."/>
            <person name="Goyal A."/>
            <person name="Pietrovski S."/>
            <person name="Church G.M."/>
            <person name="Daniels C.J."/>
            <person name="Mao J.-I."/>
            <person name="Rice P."/>
            <person name="Noelling J."/>
            <person name="Reeve J.N."/>
        </authorList>
    </citation>
    <scope>NUCLEOTIDE SEQUENCE [LARGE SCALE GENOMIC DNA]</scope>
    <source>
        <strain>ATCC 29096 / DSM 1053 / JCM 10044 / NBRC 100330 / Delta H</strain>
    </source>
</reference>
<keyword id="KW-0067">ATP-binding</keyword>
<keyword id="KW-0315">Glutamine amidotransferase</keyword>
<keyword id="KW-0332">GMP biosynthesis</keyword>
<keyword id="KW-0436">Ligase</keyword>
<keyword id="KW-0547">Nucleotide-binding</keyword>
<keyword id="KW-0658">Purine biosynthesis</keyword>
<keyword id="KW-1185">Reference proteome</keyword>
<proteinExistence type="inferred from homology"/>